<gene>
    <name type="primary">Gr77a</name>
    <name type="synonym">GR77E.1</name>
    <name type="ORF">CG32433</name>
</gene>
<protein>
    <recommendedName>
        <fullName>Putative gustatory receptor 77a</fullName>
    </recommendedName>
</protein>
<organism evidence="6">
    <name type="scientific">Drosophila melanogaster</name>
    <name type="common">Fruit fly</name>
    <dbReference type="NCBI Taxonomy" id="7227"/>
    <lineage>
        <taxon>Eukaryota</taxon>
        <taxon>Metazoa</taxon>
        <taxon>Ecdysozoa</taxon>
        <taxon>Arthropoda</taxon>
        <taxon>Hexapoda</taxon>
        <taxon>Insecta</taxon>
        <taxon>Pterygota</taxon>
        <taxon>Neoptera</taxon>
        <taxon>Endopterygota</taxon>
        <taxon>Diptera</taxon>
        <taxon>Brachycera</taxon>
        <taxon>Muscomorpha</taxon>
        <taxon>Ephydroidea</taxon>
        <taxon>Drosophilidae</taxon>
        <taxon>Drosophila</taxon>
        <taxon>Sophophora</taxon>
    </lineage>
</organism>
<accession>Q8IPU5</accession>
<reference evidence="5" key="1">
    <citation type="journal article" date="2000" name="Science">
        <title>The genome sequence of Drosophila melanogaster.</title>
        <authorList>
            <person name="Adams M.D."/>
            <person name="Celniker S.E."/>
            <person name="Holt R.A."/>
            <person name="Evans C.A."/>
            <person name="Gocayne J.D."/>
            <person name="Amanatides P.G."/>
            <person name="Scherer S.E."/>
            <person name="Li P.W."/>
            <person name="Hoskins R.A."/>
            <person name="Galle R.F."/>
            <person name="George R.A."/>
            <person name="Lewis S.E."/>
            <person name="Richards S."/>
            <person name="Ashburner M."/>
            <person name="Henderson S.N."/>
            <person name="Sutton G.G."/>
            <person name="Wortman J.R."/>
            <person name="Yandell M.D."/>
            <person name="Zhang Q."/>
            <person name="Chen L.X."/>
            <person name="Brandon R.C."/>
            <person name="Rogers Y.-H.C."/>
            <person name="Blazej R.G."/>
            <person name="Champe M."/>
            <person name="Pfeiffer B.D."/>
            <person name="Wan K.H."/>
            <person name="Doyle C."/>
            <person name="Baxter E.G."/>
            <person name="Helt G."/>
            <person name="Nelson C.R."/>
            <person name="Miklos G.L.G."/>
            <person name="Abril J.F."/>
            <person name="Agbayani A."/>
            <person name="An H.-J."/>
            <person name="Andrews-Pfannkoch C."/>
            <person name="Baldwin D."/>
            <person name="Ballew R.M."/>
            <person name="Basu A."/>
            <person name="Baxendale J."/>
            <person name="Bayraktaroglu L."/>
            <person name="Beasley E.M."/>
            <person name="Beeson K.Y."/>
            <person name="Benos P.V."/>
            <person name="Berman B.P."/>
            <person name="Bhandari D."/>
            <person name="Bolshakov S."/>
            <person name="Borkova D."/>
            <person name="Botchan M.R."/>
            <person name="Bouck J."/>
            <person name="Brokstein P."/>
            <person name="Brottier P."/>
            <person name="Burtis K.C."/>
            <person name="Busam D.A."/>
            <person name="Butler H."/>
            <person name="Cadieu E."/>
            <person name="Center A."/>
            <person name="Chandra I."/>
            <person name="Cherry J.M."/>
            <person name="Cawley S."/>
            <person name="Dahlke C."/>
            <person name="Davenport L.B."/>
            <person name="Davies P."/>
            <person name="de Pablos B."/>
            <person name="Delcher A."/>
            <person name="Deng Z."/>
            <person name="Mays A.D."/>
            <person name="Dew I."/>
            <person name="Dietz S.M."/>
            <person name="Dodson K."/>
            <person name="Doup L.E."/>
            <person name="Downes M."/>
            <person name="Dugan-Rocha S."/>
            <person name="Dunkov B.C."/>
            <person name="Dunn P."/>
            <person name="Durbin K.J."/>
            <person name="Evangelista C.C."/>
            <person name="Ferraz C."/>
            <person name="Ferriera S."/>
            <person name="Fleischmann W."/>
            <person name="Fosler C."/>
            <person name="Gabrielian A.E."/>
            <person name="Garg N.S."/>
            <person name="Gelbart W.M."/>
            <person name="Glasser K."/>
            <person name="Glodek A."/>
            <person name="Gong F."/>
            <person name="Gorrell J.H."/>
            <person name="Gu Z."/>
            <person name="Guan P."/>
            <person name="Harris M."/>
            <person name="Harris N.L."/>
            <person name="Harvey D.A."/>
            <person name="Heiman T.J."/>
            <person name="Hernandez J.R."/>
            <person name="Houck J."/>
            <person name="Hostin D."/>
            <person name="Houston K.A."/>
            <person name="Howland T.J."/>
            <person name="Wei M.-H."/>
            <person name="Ibegwam C."/>
            <person name="Jalali M."/>
            <person name="Kalush F."/>
            <person name="Karpen G.H."/>
            <person name="Ke Z."/>
            <person name="Kennison J.A."/>
            <person name="Ketchum K.A."/>
            <person name="Kimmel B.E."/>
            <person name="Kodira C.D."/>
            <person name="Kraft C.L."/>
            <person name="Kravitz S."/>
            <person name="Kulp D."/>
            <person name="Lai Z."/>
            <person name="Lasko P."/>
            <person name="Lei Y."/>
            <person name="Levitsky A.A."/>
            <person name="Li J.H."/>
            <person name="Li Z."/>
            <person name="Liang Y."/>
            <person name="Lin X."/>
            <person name="Liu X."/>
            <person name="Mattei B."/>
            <person name="McIntosh T.C."/>
            <person name="McLeod M.P."/>
            <person name="McPherson D."/>
            <person name="Merkulov G."/>
            <person name="Milshina N.V."/>
            <person name="Mobarry C."/>
            <person name="Morris J."/>
            <person name="Moshrefi A."/>
            <person name="Mount S.M."/>
            <person name="Moy M."/>
            <person name="Murphy B."/>
            <person name="Murphy L."/>
            <person name="Muzny D.M."/>
            <person name="Nelson D.L."/>
            <person name="Nelson D.R."/>
            <person name="Nelson K.A."/>
            <person name="Nixon K."/>
            <person name="Nusskern D.R."/>
            <person name="Pacleb J.M."/>
            <person name="Palazzolo M."/>
            <person name="Pittman G.S."/>
            <person name="Pan S."/>
            <person name="Pollard J."/>
            <person name="Puri V."/>
            <person name="Reese M.G."/>
            <person name="Reinert K."/>
            <person name="Remington K."/>
            <person name="Saunders R.D.C."/>
            <person name="Scheeler F."/>
            <person name="Shen H."/>
            <person name="Shue B.C."/>
            <person name="Siden-Kiamos I."/>
            <person name="Simpson M."/>
            <person name="Skupski M.P."/>
            <person name="Smith T.J."/>
            <person name="Spier E."/>
            <person name="Spradling A.C."/>
            <person name="Stapleton M."/>
            <person name="Strong R."/>
            <person name="Sun E."/>
            <person name="Svirskas R."/>
            <person name="Tector C."/>
            <person name="Turner R."/>
            <person name="Venter E."/>
            <person name="Wang A.H."/>
            <person name="Wang X."/>
            <person name="Wang Z.-Y."/>
            <person name="Wassarman D.A."/>
            <person name="Weinstock G.M."/>
            <person name="Weissenbach J."/>
            <person name="Williams S.M."/>
            <person name="Woodage T."/>
            <person name="Worley K.C."/>
            <person name="Wu D."/>
            <person name="Yang S."/>
            <person name="Yao Q.A."/>
            <person name="Ye J."/>
            <person name="Yeh R.-F."/>
            <person name="Zaveri J.S."/>
            <person name="Zhan M."/>
            <person name="Zhang G."/>
            <person name="Zhao Q."/>
            <person name="Zheng L."/>
            <person name="Zheng X.H."/>
            <person name="Zhong F.N."/>
            <person name="Zhong W."/>
            <person name="Zhou X."/>
            <person name="Zhu S.C."/>
            <person name="Zhu X."/>
            <person name="Smith H.O."/>
            <person name="Gibbs R.A."/>
            <person name="Myers E.W."/>
            <person name="Rubin G.M."/>
            <person name="Venter J.C."/>
        </authorList>
    </citation>
    <scope>NUCLEOTIDE SEQUENCE [LARGE SCALE GENOMIC DNA]</scope>
    <source>
        <strain evidence="3">Berkeley</strain>
    </source>
</reference>
<reference evidence="5" key="2">
    <citation type="journal article" date="2002" name="Genome Biol.">
        <title>Annotation of the Drosophila melanogaster euchromatic genome: a systematic review.</title>
        <authorList>
            <person name="Misra S."/>
            <person name="Crosby M.A."/>
            <person name="Mungall C.J."/>
            <person name="Matthews B.B."/>
            <person name="Campbell K.S."/>
            <person name="Hradecky P."/>
            <person name="Huang Y."/>
            <person name="Kaminker J.S."/>
            <person name="Millburn G.H."/>
            <person name="Prochnik S.E."/>
            <person name="Smith C.D."/>
            <person name="Tupy J.L."/>
            <person name="Whitfield E.J."/>
            <person name="Bayraktaroglu L."/>
            <person name="Berman B.P."/>
            <person name="Bettencourt B.R."/>
            <person name="Celniker S.E."/>
            <person name="de Grey A.D.N.J."/>
            <person name="Drysdale R.A."/>
            <person name="Harris N.L."/>
            <person name="Richter J."/>
            <person name="Russo S."/>
            <person name="Schroeder A.J."/>
            <person name="Shu S.Q."/>
            <person name="Stapleton M."/>
            <person name="Yamada C."/>
            <person name="Ashburner M."/>
            <person name="Gelbart W.M."/>
            <person name="Rubin G.M."/>
            <person name="Lewis S.E."/>
        </authorList>
    </citation>
    <scope>GENOME REANNOTATION</scope>
    <source>
        <strain>Berkeley</strain>
    </source>
</reference>
<reference evidence="5" key="3">
    <citation type="journal article" date="2000" name="Science">
        <title>Candidate taste receptors in Drosophila.</title>
        <authorList>
            <person name="Clyne P.J."/>
            <person name="Warr C.G."/>
            <person name="Carlson J.R."/>
        </authorList>
    </citation>
    <scope>IDENTIFICATION</scope>
</reference>
<reference evidence="5" key="4">
    <citation type="journal article" date="2001" name="Curr. Biol.">
        <title>Spatially restricted expression of candidate taste receptors in the Drosophila gustatory system.</title>
        <authorList>
            <person name="Dunipace L."/>
            <person name="Meister S."/>
            <person name="McNealy C."/>
            <person name="Amrein H."/>
        </authorList>
    </citation>
    <scope>IDENTIFICATION</scope>
</reference>
<reference key="5">
    <citation type="journal article" date="2011" name="J. Neurosci.">
        <title>Molecular and cellular organization of the taste system in the Drosophila larva.</title>
        <authorList>
            <person name="Kwon J.Y."/>
            <person name="Dahanukar A."/>
            <person name="Weiss L.A."/>
            <person name="Carlson J.R."/>
        </authorList>
    </citation>
    <scope>TISSUE SPECIFICITY</scope>
</reference>
<evidence type="ECO:0000250" key="1"/>
<evidence type="ECO:0000255" key="2"/>
<evidence type="ECO:0000269" key="3">
    <source>
    </source>
</evidence>
<evidence type="ECO:0000269" key="4">
    <source>
    </source>
</evidence>
<evidence type="ECO:0000305" key="5"/>
<evidence type="ECO:0000312" key="6">
    <source>
        <dbReference type="EMBL" id="AAN12140.1"/>
    </source>
</evidence>
<proteinExistence type="evidence at transcript level"/>
<sequence>MPLPLGDPLALAVSPQLGYIRITAMPRWLQLPGMSALGILYSLTRVFGLMATANWSPRGIKRVRQSLYLRIHGCVMLIFVGCFSPFAFWCIFQRMAFLRQNRILLMIGFNRYVLLLVCAFMTLWIHCFKQAEIIGCLNRLLKCRRRLRRLMHTRKLKDSMDCLATKGHLLEVVVLLSSYLLSMAQPIQILKDDPEVRRNFMYACSLVFVSVCQAILQLSLGMYTMAILFLGHLVRHSNLLLAKILADAEHIFESSQKAGFWPNRQELYKGQQKWLALELWRLLHVHHQLLKLHRSICSLCAVQAVCFLGFVPLECTIHLFFTYFMKYSKFILRKYGRSFPLNYFAIAFLVGLFTNLLLVILPTYYSERRFNCTREIIKGGGLAFPSRITVKQLRHTMHFYGLYLKNVEHVFAVSACGLFKLNNAILFCIVGAILEYLMILIQFDKVLNK</sequence>
<keyword id="KW-1003">Cell membrane</keyword>
<keyword id="KW-0472">Membrane</keyword>
<keyword id="KW-0675">Receptor</keyword>
<keyword id="KW-1185">Reference proteome</keyword>
<keyword id="KW-0807">Transducer</keyword>
<keyword id="KW-0812">Transmembrane</keyword>
<keyword id="KW-1133">Transmembrane helix</keyword>
<comment type="function">
    <text evidence="1">Probable gustatory receptor which mediates acceptance or avoidance behavior, depending on its substrates.</text>
</comment>
<comment type="subcellular location">
    <subcellularLocation>
        <location evidence="1">Cell membrane</location>
        <topology evidence="1">Multi-pass membrane protein</topology>
    </subcellularLocation>
</comment>
<comment type="tissue specificity">
    <text evidence="4">In larvae, is expressed in dorsal pharyngeal sense organ.</text>
</comment>
<comment type="similarity">
    <text evidence="5">Belongs to the insect chemoreceptor superfamily. Gustatory receptor (GR) family. Gr77a subfamily.</text>
</comment>
<dbReference type="EMBL" id="AE014296">
    <property type="protein sequence ID" value="AAN12140.1"/>
    <property type="molecule type" value="Genomic_DNA"/>
</dbReference>
<dbReference type="RefSeq" id="NP_730560.1">
    <property type="nucleotide sequence ID" value="NM_168868.2"/>
</dbReference>
<dbReference type="SMR" id="Q8IPU5"/>
<dbReference type="FunCoup" id="Q8IPU5">
    <property type="interactions" value="13"/>
</dbReference>
<dbReference type="STRING" id="7227.FBpp0077939"/>
<dbReference type="PaxDb" id="7227-FBpp0077939"/>
<dbReference type="EnsemblMetazoa" id="FBtr0078281">
    <property type="protein sequence ID" value="FBpp0077939"/>
    <property type="gene ID" value="FBgn0045474"/>
</dbReference>
<dbReference type="GeneID" id="117476"/>
<dbReference type="KEGG" id="dme:Dmel_CG32433"/>
<dbReference type="AGR" id="FB:FBgn0045474"/>
<dbReference type="CTD" id="117476"/>
<dbReference type="FlyBase" id="FBgn0045474">
    <property type="gene designation" value="Gr77a"/>
</dbReference>
<dbReference type="VEuPathDB" id="VectorBase:FBgn0045474"/>
<dbReference type="eggNOG" id="ENOG502T3Q4">
    <property type="taxonomic scope" value="Eukaryota"/>
</dbReference>
<dbReference type="HOGENOM" id="CLU_687483_0_0_1"/>
<dbReference type="InParanoid" id="Q8IPU5"/>
<dbReference type="OMA" id="FCIVEGM"/>
<dbReference type="OrthoDB" id="10068192at2759"/>
<dbReference type="PhylomeDB" id="Q8IPU5"/>
<dbReference type="BioGRID-ORCS" id="117476">
    <property type="hits" value="0 hits in 1 CRISPR screen"/>
</dbReference>
<dbReference type="GenomeRNAi" id="117476"/>
<dbReference type="PRO" id="PR:Q8IPU5"/>
<dbReference type="Proteomes" id="UP000000803">
    <property type="component" value="Chromosome 3L"/>
</dbReference>
<dbReference type="Bgee" id="FBgn0045474">
    <property type="expression patterns" value="Expressed in adult Malpighian tubule stellate cell of main segment in Malpighian tubule and 17 other cell types or tissues"/>
</dbReference>
<dbReference type="ExpressionAtlas" id="Q8IPU5">
    <property type="expression patterns" value="baseline and differential"/>
</dbReference>
<dbReference type="GO" id="GO:0030424">
    <property type="term" value="C:axon"/>
    <property type="evidence" value="ECO:0000318"/>
    <property type="project" value="GO_Central"/>
</dbReference>
<dbReference type="GO" id="GO:0030425">
    <property type="term" value="C:dendrite"/>
    <property type="evidence" value="ECO:0000318"/>
    <property type="project" value="GO_Central"/>
</dbReference>
<dbReference type="GO" id="GO:0016020">
    <property type="term" value="C:membrane"/>
    <property type="evidence" value="ECO:0000303"/>
    <property type="project" value="UniProtKB"/>
</dbReference>
<dbReference type="GO" id="GO:0043025">
    <property type="term" value="C:neuronal cell body"/>
    <property type="evidence" value="ECO:0000318"/>
    <property type="project" value="GO_Central"/>
</dbReference>
<dbReference type="GO" id="GO:0005886">
    <property type="term" value="C:plasma membrane"/>
    <property type="evidence" value="ECO:0000250"/>
    <property type="project" value="FlyBase"/>
</dbReference>
<dbReference type="GO" id="GO:0015276">
    <property type="term" value="F:ligand-gated monoatomic ion channel activity"/>
    <property type="evidence" value="ECO:0000250"/>
    <property type="project" value="FlyBase"/>
</dbReference>
<dbReference type="GO" id="GO:0008527">
    <property type="term" value="F:taste receptor activity"/>
    <property type="evidence" value="ECO:0000303"/>
    <property type="project" value="UniProtKB"/>
</dbReference>
<dbReference type="GO" id="GO:0007635">
    <property type="term" value="P:chemosensory behavior"/>
    <property type="evidence" value="ECO:0000318"/>
    <property type="project" value="GO_Central"/>
</dbReference>
<dbReference type="GO" id="GO:0008049">
    <property type="term" value="P:male courtship behavior"/>
    <property type="evidence" value="ECO:0000318"/>
    <property type="project" value="GO_Central"/>
</dbReference>
<dbReference type="GO" id="GO:0034220">
    <property type="term" value="P:monoatomic ion transmembrane transport"/>
    <property type="evidence" value="ECO:0000250"/>
    <property type="project" value="FlyBase"/>
</dbReference>
<dbReference type="GO" id="GO:0050909">
    <property type="term" value="P:sensory perception of taste"/>
    <property type="evidence" value="ECO:0000303"/>
    <property type="project" value="UniProtKB"/>
</dbReference>
<dbReference type="GO" id="GO:0007165">
    <property type="term" value="P:signal transduction"/>
    <property type="evidence" value="ECO:0007669"/>
    <property type="project" value="UniProtKB-KW"/>
</dbReference>
<dbReference type="InterPro" id="IPR013604">
    <property type="entry name" value="7TM_chemorcpt"/>
</dbReference>
<dbReference type="PANTHER" id="PTHR21143:SF123">
    <property type="entry name" value="GUSTATORY RECEPTOR FOR SUGAR TASTE 43A-RELATED"/>
    <property type="match status" value="1"/>
</dbReference>
<dbReference type="PANTHER" id="PTHR21143">
    <property type="entry name" value="INVERTEBRATE GUSTATORY RECEPTOR"/>
    <property type="match status" value="1"/>
</dbReference>
<dbReference type="Pfam" id="PF08395">
    <property type="entry name" value="7tm_7"/>
    <property type="match status" value="1"/>
</dbReference>
<feature type="chain" id="PRO_0000216537" description="Putative gustatory receptor 77a">
    <location>
        <begin position="1"/>
        <end position="449"/>
    </location>
</feature>
<feature type="topological domain" description="Cytoplasmic" evidence="1">
    <location>
        <begin position="1"/>
        <end position="27"/>
    </location>
</feature>
<feature type="transmembrane region" description="Helical; Name=1" evidence="2">
    <location>
        <begin position="28"/>
        <end position="50"/>
    </location>
</feature>
<feature type="topological domain" description="Extracellular" evidence="1">
    <location>
        <begin position="51"/>
        <end position="70"/>
    </location>
</feature>
<feature type="transmembrane region" description="Helical; Name=2" evidence="2">
    <location>
        <begin position="71"/>
        <end position="93"/>
    </location>
</feature>
<feature type="topological domain" description="Cytoplasmic" evidence="1">
    <location>
        <begin position="94"/>
        <end position="102"/>
    </location>
</feature>
<feature type="transmembrane region" description="Helical; Name=3" evidence="2">
    <location>
        <begin position="103"/>
        <end position="125"/>
    </location>
</feature>
<feature type="topological domain" description="Extracellular" evidence="1">
    <location>
        <begin position="126"/>
        <end position="205"/>
    </location>
</feature>
<feature type="transmembrane region" description="Helical; Name=4" evidence="2">
    <location>
        <begin position="206"/>
        <end position="228"/>
    </location>
</feature>
<feature type="topological domain" description="Cytoplasmic" evidence="1">
    <location>
        <begin position="229"/>
        <end position="298"/>
    </location>
</feature>
<feature type="transmembrane region" description="Helical; Name=5" evidence="2">
    <location>
        <begin position="299"/>
        <end position="321"/>
    </location>
</feature>
<feature type="topological domain" description="Extracellular" evidence="1">
    <location>
        <begin position="322"/>
        <end position="340"/>
    </location>
</feature>
<feature type="transmembrane region" description="Helical; Name=6" evidence="2">
    <location>
        <begin position="341"/>
        <end position="363"/>
    </location>
</feature>
<feature type="topological domain" description="Cytoplasmic" evidence="1">
    <location>
        <begin position="364"/>
        <end position="420"/>
    </location>
</feature>
<feature type="transmembrane region" description="Helical; Name=7" evidence="2">
    <location>
        <begin position="421"/>
        <end position="443"/>
    </location>
</feature>
<feature type="topological domain" description="Extracellular" evidence="1">
    <location>
        <begin position="444"/>
        <end position="449"/>
    </location>
</feature>
<name>GR77A_DROME</name>